<evidence type="ECO:0000250" key="1"/>
<evidence type="ECO:0000255" key="2"/>
<evidence type="ECO:0000305" key="3"/>
<evidence type="ECO:0000305" key="4">
    <source>
    </source>
</evidence>
<feature type="transit peptide" description="Chloroplast" evidence="2">
    <location>
        <begin position="1"/>
        <end position="49"/>
    </location>
</feature>
<feature type="chain" id="PRO_0000418607" description="Probable sodium/metabolite cotransporter BASS6, chloroplastic">
    <location>
        <begin position="50"/>
        <end position="409"/>
    </location>
</feature>
<feature type="transmembrane region" description="Helical" evidence="2">
    <location>
        <begin position="100"/>
        <end position="120"/>
    </location>
</feature>
<feature type="transmembrane region" description="Helical" evidence="2">
    <location>
        <begin position="121"/>
        <end position="141"/>
    </location>
</feature>
<feature type="transmembrane region" description="Helical" evidence="2">
    <location>
        <begin position="170"/>
        <end position="190"/>
    </location>
</feature>
<feature type="transmembrane region" description="Helical" evidence="2">
    <location>
        <begin position="191"/>
        <end position="211"/>
    </location>
</feature>
<feature type="transmembrane region" description="Helical" evidence="2">
    <location>
        <begin position="221"/>
        <end position="241"/>
    </location>
</feature>
<feature type="transmembrane region" description="Helical" evidence="2">
    <location>
        <begin position="253"/>
        <end position="273"/>
    </location>
</feature>
<feature type="transmembrane region" description="Helical" evidence="2">
    <location>
        <begin position="285"/>
        <end position="305"/>
    </location>
</feature>
<feature type="transmembrane region" description="Helical" evidence="2">
    <location>
        <begin position="316"/>
        <end position="336"/>
    </location>
</feature>
<feature type="transmembrane region" description="Helical" evidence="2">
    <location>
        <begin position="381"/>
        <end position="401"/>
    </location>
</feature>
<sequence length="409" mass="44207">MSVITTPIETLHLKSTLRLLPRAVYRSQRIQVFPPNIFSNTSLSSPLRIDPISQVGGSRNLWRRYASDNFSEMGLDPGADPFKVIEKPSIVDRMKKANSILPHVVLASTILALIYPPSFTWFTSRYFVPALGFLMFAVGINSNEKDFLEAFKRPKAILLGYVGQYLVKPVLGFIFGLAAVSLFQLPTPIGAGIMLVSCVSGAQLSNYATFLTDPALAPLSIVMTSLSTATAVLVTPMLSLLLIGKKLPVDVKGMISSILQVVIAPIAAGLLLNKLFPKVSNAIRPFLPILSVLDTACCVGAPLALNINSVMSPFGATILLLVTMFHLSAFLAGYFLTGSVFRNAPDAKAMQRTLSYETGMQSSLLALALATKFFQDPLVGIPPAISTVVMSLMGFTLVLIWSKEKSNTF</sequence>
<proteinExistence type="evidence at transcript level"/>
<organism>
    <name type="scientific">Arabidopsis thaliana</name>
    <name type="common">Mouse-ear cress</name>
    <dbReference type="NCBI Taxonomy" id="3702"/>
    <lineage>
        <taxon>Eukaryota</taxon>
        <taxon>Viridiplantae</taxon>
        <taxon>Streptophyta</taxon>
        <taxon>Embryophyta</taxon>
        <taxon>Tracheophyta</taxon>
        <taxon>Spermatophyta</taxon>
        <taxon>Magnoliopsida</taxon>
        <taxon>eudicotyledons</taxon>
        <taxon>Gunneridae</taxon>
        <taxon>Pentapetalae</taxon>
        <taxon>rosids</taxon>
        <taxon>malvids</taxon>
        <taxon>Brassicales</taxon>
        <taxon>Brassicaceae</taxon>
        <taxon>Camelineae</taxon>
        <taxon>Arabidopsis</taxon>
    </lineage>
</organism>
<reference key="1">
    <citation type="journal article" date="1999" name="Nature">
        <title>Sequence and analysis of chromosome 4 of the plant Arabidopsis thaliana.</title>
        <authorList>
            <person name="Mayer K.F.X."/>
            <person name="Schueller C."/>
            <person name="Wambutt R."/>
            <person name="Murphy G."/>
            <person name="Volckaert G."/>
            <person name="Pohl T."/>
            <person name="Duesterhoeft A."/>
            <person name="Stiekema W."/>
            <person name="Entian K.-D."/>
            <person name="Terryn N."/>
            <person name="Harris B."/>
            <person name="Ansorge W."/>
            <person name="Brandt P."/>
            <person name="Grivell L.A."/>
            <person name="Rieger M."/>
            <person name="Weichselgartner M."/>
            <person name="de Simone V."/>
            <person name="Obermaier B."/>
            <person name="Mache R."/>
            <person name="Mueller M."/>
            <person name="Kreis M."/>
            <person name="Delseny M."/>
            <person name="Puigdomenech P."/>
            <person name="Watson M."/>
            <person name="Schmidtheini T."/>
            <person name="Reichert B."/>
            <person name="Portetelle D."/>
            <person name="Perez-Alonso M."/>
            <person name="Boutry M."/>
            <person name="Bancroft I."/>
            <person name="Vos P."/>
            <person name="Hoheisel J."/>
            <person name="Zimmermann W."/>
            <person name="Wedler H."/>
            <person name="Ridley P."/>
            <person name="Langham S.-A."/>
            <person name="McCullagh B."/>
            <person name="Bilham L."/>
            <person name="Robben J."/>
            <person name="van der Schueren J."/>
            <person name="Grymonprez B."/>
            <person name="Chuang Y.-J."/>
            <person name="Vandenbussche F."/>
            <person name="Braeken M."/>
            <person name="Weltjens I."/>
            <person name="Voet M."/>
            <person name="Bastiaens I."/>
            <person name="Aert R."/>
            <person name="Defoor E."/>
            <person name="Weitzenegger T."/>
            <person name="Bothe G."/>
            <person name="Ramsperger U."/>
            <person name="Hilbert H."/>
            <person name="Braun M."/>
            <person name="Holzer E."/>
            <person name="Brandt A."/>
            <person name="Peters S."/>
            <person name="van Staveren M."/>
            <person name="Dirkse W."/>
            <person name="Mooijman P."/>
            <person name="Klein Lankhorst R."/>
            <person name="Rose M."/>
            <person name="Hauf J."/>
            <person name="Koetter P."/>
            <person name="Berneiser S."/>
            <person name="Hempel S."/>
            <person name="Feldpausch M."/>
            <person name="Lamberth S."/>
            <person name="Van den Daele H."/>
            <person name="De Keyser A."/>
            <person name="Buysshaert C."/>
            <person name="Gielen J."/>
            <person name="Villarroel R."/>
            <person name="De Clercq R."/>
            <person name="van Montagu M."/>
            <person name="Rogers J."/>
            <person name="Cronin A."/>
            <person name="Quail M.A."/>
            <person name="Bray-Allen S."/>
            <person name="Clark L."/>
            <person name="Doggett J."/>
            <person name="Hall S."/>
            <person name="Kay M."/>
            <person name="Lennard N."/>
            <person name="McLay K."/>
            <person name="Mayes R."/>
            <person name="Pettett A."/>
            <person name="Rajandream M.A."/>
            <person name="Lyne M."/>
            <person name="Benes V."/>
            <person name="Rechmann S."/>
            <person name="Borkova D."/>
            <person name="Bloecker H."/>
            <person name="Scharfe M."/>
            <person name="Grimm M."/>
            <person name="Loehnert T.-H."/>
            <person name="Dose S."/>
            <person name="de Haan M."/>
            <person name="Maarse A.C."/>
            <person name="Schaefer M."/>
            <person name="Mueller-Auer S."/>
            <person name="Gabel C."/>
            <person name="Fuchs M."/>
            <person name="Fartmann B."/>
            <person name="Granderath K."/>
            <person name="Dauner D."/>
            <person name="Herzl A."/>
            <person name="Neumann S."/>
            <person name="Argiriou A."/>
            <person name="Vitale D."/>
            <person name="Liguori R."/>
            <person name="Piravandi E."/>
            <person name="Massenet O."/>
            <person name="Quigley F."/>
            <person name="Clabauld G."/>
            <person name="Muendlein A."/>
            <person name="Felber R."/>
            <person name="Schnabl S."/>
            <person name="Hiller R."/>
            <person name="Schmidt W."/>
            <person name="Lecharny A."/>
            <person name="Aubourg S."/>
            <person name="Chefdor F."/>
            <person name="Cooke R."/>
            <person name="Berger C."/>
            <person name="Monfort A."/>
            <person name="Casacuberta E."/>
            <person name="Gibbons T."/>
            <person name="Weber N."/>
            <person name="Vandenbol M."/>
            <person name="Bargues M."/>
            <person name="Terol J."/>
            <person name="Torres A."/>
            <person name="Perez-Perez A."/>
            <person name="Purnelle B."/>
            <person name="Bent E."/>
            <person name="Johnson S."/>
            <person name="Tacon D."/>
            <person name="Jesse T."/>
            <person name="Heijnen L."/>
            <person name="Schwarz S."/>
            <person name="Scholler P."/>
            <person name="Heber S."/>
            <person name="Francs P."/>
            <person name="Bielke C."/>
            <person name="Frishman D."/>
            <person name="Haase D."/>
            <person name="Lemcke K."/>
            <person name="Mewes H.-W."/>
            <person name="Stocker S."/>
            <person name="Zaccaria P."/>
            <person name="Bevan M."/>
            <person name="Wilson R.K."/>
            <person name="de la Bastide M."/>
            <person name="Habermann K."/>
            <person name="Parnell L."/>
            <person name="Dedhia N."/>
            <person name="Gnoj L."/>
            <person name="Schutz K."/>
            <person name="Huang E."/>
            <person name="Spiegel L."/>
            <person name="Sekhon M."/>
            <person name="Murray J."/>
            <person name="Sheet P."/>
            <person name="Cordes M."/>
            <person name="Abu-Threideh J."/>
            <person name="Stoneking T."/>
            <person name="Kalicki J."/>
            <person name="Graves T."/>
            <person name="Harmon G."/>
            <person name="Edwards J."/>
            <person name="Latreille P."/>
            <person name="Courtney L."/>
            <person name="Cloud J."/>
            <person name="Abbott A."/>
            <person name="Scott K."/>
            <person name="Johnson D."/>
            <person name="Minx P."/>
            <person name="Bentley D."/>
            <person name="Fulton B."/>
            <person name="Miller N."/>
            <person name="Greco T."/>
            <person name="Kemp K."/>
            <person name="Kramer J."/>
            <person name="Fulton L."/>
            <person name="Mardis E."/>
            <person name="Dante M."/>
            <person name="Pepin K."/>
            <person name="Hillier L.W."/>
            <person name="Nelson J."/>
            <person name="Spieth J."/>
            <person name="Ryan E."/>
            <person name="Andrews S."/>
            <person name="Geisel C."/>
            <person name="Layman D."/>
            <person name="Du H."/>
            <person name="Ali J."/>
            <person name="Berghoff A."/>
            <person name="Jones K."/>
            <person name="Drone K."/>
            <person name="Cotton M."/>
            <person name="Joshu C."/>
            <person name="Antonoiu B."/>
            <person name="Zidanic M."/>
            <person name="Strong C."/>
            <person name="Sun H."/>
            <person name="Lamar B."/>
            <person name="Yordan C."/>
            <person name="Ma P."/>
            <person name="Zhong J."/>
            <person name="Preston R."/>
            <person name="Vil D."/>
            <person name="Shekher M."/>
            <person name="Matero A."/>
            <person name="Shah R."/>
            <person name="Swaby I.K."/>
            <person name="O'Shaughnessy A."/>
            <person name="Rodriguez M."/>
            <person name="Hoffman J."/>
            <person name="Till S."/>
            <person name="Granat S."/>
            <person name="Shohdy N."/>
            <person name="Hasegawa A."/>
            <person name="Hameed A."/>
            <person name="Lodhi M."/>
            <person name="Johnson A."/>
            <person name="Chen E."/>
            <person name="Marra M.A."/>
            <person name="Martienssen R."/>
            <person name="McCombie W.R."/>
        </authorList>
    </citation>
    <scope>NUCLEOTIDE SEQUENCE [LARGE SCALE GENOMIC DNA]</scope>
    <source>
        <strain>cv. Columbia</strain>
    </source>
</reference>
<reference key="2">
    <citation type="journal article" date="2017" name="Plant J.">
        <title>Araport11: a complete reannotation of the Arabidopsis thaliana reference genome.</title>
        <authorList>
            <person name="Cheng C.Y."/>
            <person name="Krishnakumar V."/>
            <person name="Chan A.P."/>
            <person name="Thibaud-Nissen F."/>
            <person name="Schobel S."/>
            <person name="Town C.D."/>
        </authorList>
    </citation>
    <scope>GENOME REANNOTATION</scope>
    <source>
        <strain>cv. Columbia</strain>
    </source>
</reference>
<reference key="3">
    <citation type="journal article" date="2003" name="Science">
        <title>Empirical analysis of transcriptional activity in the Arabidopsis genome.</title>
        <authorList>
            <person name="Yamada K."/>
            <person name="Lim J."/>
            <person name="Dale J.M."/>
            <person name="Chen H."/>
            <person name="Shinn P."/>
            <person name="Palm C.J."/>
            <person name="Southwick A.M."/>
            <person name="Wu H.C."/>
            <person name="Kim C.J."/>
            <person name="Nguyen M."/>
            <person name="Pham P.K."/>
            <person name="Cheuk R.F."/>
            <person name="Karlin-Newmann G."/>
            <person name="Liu S.X."/>
            <person name="Lam B."/>
            <person name="Sakano H."/>
            <person name="Wu T."/>
            <person name="Yu G."/>
            <person name="Miranda M."/>
            <person name="Quach H.L."/>
            <person name="Tripp M."/>
            <person name="Chang C.H."/>
            <person name="Lee J.M."/>
            <person name="Toriumi M.J."/>
            <person name="Chan M.M."/>
            <person name="Tang C.C."/>
            <person name="Onodera C.S."/>
            <person name="Deng J.M."/>
            <person name="Akiyama K."/>
            <person name="Ansari Y."/>
            <person name="Arakawa T."/>
            <person name="Banh J."/>
            <person name="Banno F."/>
            <person name="Bowser L."/>
            <person name="Brooks S.Y."/>
            <person name="Carninci P."/>
            <person name="Chao Q."/>
            <person name="Choy N."/>
            <person name="Enju A."/>
            <person name="Goldsmith A.D."/>
            <person name="Gurjal M."/>
            <person name="Hansen N.F."/>
            <person name="Hayashizaki Y."/>
            <person name="Johnson-Hopson C."/>
            <person name="Hsuan V.W."/>
            <person name="Iida K."/>
            <person name="Karnes M."/>
            <person name="Khan S."/>
            <person name="Koesema E."/>
            <person name="Ishida J."/>
            <person name="Jiang P.X."/>
            <person name="Jones T."/>
            <person name="Kawai J."/>
            <person name="Kamiya A."/>
            <person name="Meyers C."/>
            <person name="Nakajima M."/>
            <person name="Narusaka M."/>
            <person name="Seki M."/>
            <person name="Sakurai T."/>
            <person name="Satou M."/>
            <person name="Tamse R."/>
            <person name="Vaysberg M."/>
            <person name="Wallender E.K."/>
            <person name="Wong C."/>
            <person name="Yamamura Y."/>
            <person name="Yuan S."/>
            <person name="Shinozaki K."/>
            <person name="Davis R.W."/>
            <person name="Theologis A."/>
            <person name="Ecker J.R."/>
        </authorList>
    </citation>
    <scope>NUCLEOTIDE SEQUENCE [LARGE SCALE MRNA]</scope>
    <source>
        <strain>cv. Columbia</strain>
    </source>
</reference>
<reference key="4">
    <citation type="submission" date="2002-03" db="EMBL/GenBank/DDBJ databases">
        <title>Full-length cDNA from Arabidopsis thaliana.</title>
        <authorList>
            <person name="Brover V.V."/>
            <person name="Troukhan M.E."/>
            <person name="Alexandrov N.A."/>
            <person name="Lu Y.-P."/>
            <person name="Flavell R.B."/>
            <person name="Feldmann K.A."/>
        </authorList>
    </citation>
    <scope>NUCLEOTIDE SEQUENCE [LARGE SCALE MRNA]</scope>
</reference>
<reference key="5">
    <citation type="journal article" date="2009" name="Plant Cell">
        <title>The plastidic bile acid transporter 5 is required for the biosynthesis of methionine-derived glucosinolates in Arabidopsis thaliana.</title>
        <authorList>
            <person name="Gigolashvili T."/>
            <person name="Yatusevich R."/>
            <person name="Rollwitz I."/>
            <person name="Humphry M."/>
            <person name="Gershenzon J."/>
            <person name="Fluegge U.-I."/>
        </authorList>
    </citation>
    <scope>SUBCELLULAR LOCATION</scope>
</reference>
<accession>Q8VYY4</accession>
<accession>O49665</accession>
<dbReference type="EMBL" id="AL021635">
    <property type="protein sequence ID" value="CAA16569.1"/>
    <property type="status" value="ALT_SEQ"/>
    <property type="molecule type" value="Genomic_DNA"/>
</dbReference>
<dbReference type="EMBL" id="AL031018">
    <property type="protein sequence ID" value="CAA19799.1"/>
    <property type="status" value="ALT_SEQ"/>
    <property type="molecule type" value="Genomic_DNA"/>
</dbReference>
<dbReference type="EMBL" id="AL161558">
    <property type="protein sequence ID" value="CAB79239.1"/>
    <property type="status" value="ALT_SEQ"/>
    <property type="molecule type" value="Genomic_DNA"/>
</dbReference>
<dbReference type="EMBL" id="CP002687">
    <property type="protein sequence ID" value="AEE84665.1"/>
    <property type="molecule type" value="Genomic_DNA"/>
</dbReference>
<dbReference type="EMBL" id="AY065461">
    <property type="protein sequence ID" value="AAL38902.1"/>
    <property type="molecule type" value="mRNA"/>
</dbReference>
<dbReference type="EMBL" id="AY117249">
    <property type="protein sequence ID" value="AAM51324.1"/>
    <property type="molecule type" value="mRNA"/>
</dbReference>
<dbReference type="EMBL" id="AY088859">
    <property type="protein sequence ID" value="AAM67166.1"/>
    <property type="molecule type" value="mRNA"/>
</dbReference>
<dbReference type="PIR" id="T04579">
    <property type="entry name" value="T04579"/>
</dbReference>
<dbReference type="RefSeq" id="NP_567671.1">
    <property type="nucleotide sequence ID" value="NM_118413.3"/>
</dbReference>
<dbReference type="SMR" id="Q8VYY4"/>
<dbReference type="FunCoup" id="Q8VYY4">
    <property type="interactions" value="167"/>
</dbReference>
<dbReference type="STRING" id="3702.Q8VYY4"/>
<dbReference type="PaxDb" id="3702-AT4G22840.1"/>
<dbReference type="ProteomicsDB" id="240716"/>
<dbReference type="EnsemblPlants" id="AT4G22840.1">
    <property type="protein sequence ID" value="AT4G22840.1"/>
    <property type="gene ID" value="AT4G22840"/>
</dbReference>
<dbReference type="GeneID" id="828383"/>
<dbReference type="Gramene" id="AT4G22840.1">
    <property type="protein sequence ID" value="AT4G22840.1"/>
    <property type="gene ID" value="AT4G22840"/>
</dbReference>
<dbReference type="KEGG" id="ath:AT4G22840"/>
<dbReference type="Araport" id="AT4G22840"/>
<dbReference type="TAIR" id="AT4G22840">
    <property type="gene designation" value="BASS6"/>
</dbReference>
<dbReference type="eggNOG" id="KOG2718">
    <property type="taxonomic scope" value="Eukaryota"/>
</dbReference>
<dbReference type="HOGENOM" id="CLU_034788_3_1_1"/>
<dbReference type="InParanoid" id="Q8VYY4"/>
<dbReference type="OMA" id="PLAMNIN"/>
<dbReference type="PhylomeDB" id="Q8VYY4"/>
<dbReference type="PRO" id="PR:Q8VYY4"/>
<dbReference type="Proteomes" id="UP000006548">
    <property type="component" value="Chromosome 4"/>
</dbReference>
<dbReference type="ExpressionAtlas" id="Q8VYY4">
    <property type="expression patterns" value="baseline and differential"/>
</dbReference>
<dbReference type="GO" id="GO:0009507">
    <property type="term" value="C:chloroplast"/>
    <property type="evidence" value="ECO:0000314"/>
    <property type="project" value="TAIR"/>
</dbReference>
<dbReference type="GO" id="GO:0009941">
    <property type="term" value="C:chloroplast envelope"/>
    <property type="evidence" value="ECO:0000314"/>
    <property type="project" value="UniProtKB"/>
</dbReference>
<dbReference type="GO" id="GO:0016020">
    <property type="term" value="C:membrane"/>
    <property type="evidence" value="ECO:0007669"/>
    <property type="project" value="UniProtKB-SubCell"/>
</dbReference>
<dbReference type="GO" id="GO:0043879">
    <property type="term" value="F:glycolate transmembrane transporter activity"/>
    <property type="evidence" value="ECO:0000314"/>
    <property type="project" value="TAIR"/>
</dbReference>
<dbReference type="FunFam" id="1.20.1530.20:FF:000018">
    <property type="entry name" value="Probable sodium/metabolite cotransporter BASS1, chloroplastic"/>
    <property type="match status" value="1"/>
</dbReference>
<dbReference type="Gene3D" id="1.20.1530.20">
    <property type="match status" value="1"/>
</dbReference>
<dbReference type="InterPro" id="IPR002657">
    <property type="entry name" value="BilAc:Na_symport/Acr3"/>
</dbReference>
<dbReference type="InterPro" id="IPR004710">
    <property type="entry name" value="Bilac:Na_transpt"/>
</dbReference>
<dbReference type="InterPro" id="IPR038770">
    <property type="entry name" value="Na+/solute_symporter_sf"/>
</dbReference>
<dbReference type="PANTHER" id="PTHR10361">
    <property type="entry name" value="SODIUM-BILE ACID COTRANSPORTER"/>
    <property type="match status" value="1"/>
</dbReference>
<dbReference type="PANTHER" id="PTHR10361:SF30">
    <property type="entry name" value="SODIUM_METABOLITE COTRANSPORTER BASS6, CHLOROPLASTIC-RELATED"/>
    <property type="match status" value="1"/>
</dbReference>
<dbReference type="Pfam" id="PF01758">
    <property type="entry name" value="SBF"/>
    <property type="match status" value="1"/>
</dbReference>
<comment type="function">
    <text evidence="1">May function as sodium-coupled metabolite transporter across the chloroplast envelope.</text>
</comment>
<comment type="subcellular location">
    <subcellularLocation>
        <location evidence="4">Membrane</location>
        <topology evidence="4">Multi-pass membrane protein</topology>
    </subcellularLocation>
    <subcellularLocation>
        <location evidence="4">Plastid</location>
        <location evidence="4">Chloroplast envelope</location>
    </subcellularLocation>
</comment>
<comment type="similarity">
    <text evidence="3">Belongs to the bile acid:sodium symporter (BASS) (TC 2.A.28) family.</text>
</comment>
<comment type="sequence caution" evidence="3">
    <conflict type="erroneous gene model prediction">
        <sequence resource="EMBL-CDS" id="CAA16569"/>
    </conflict>
</comment>
<comment type="sequence caution" evidence="3">
    <conflict type="erroneous gene model prediction">
        <sequence resource="EMBL-CDS" id="CAA19799"/>
    </conflict>
</comment>
<comment type="sequence caution" evidence="3">
    <conflict type="erroneous gene model prediction">
        <sequence resource="EMBL-CDS" id="CAB79239"/>
    </conflict>
</comment>
<name>BASS6_ARATH</name>
<protein>
    <recommendedName>
        <fullName>Probable sodium/metabolite cotransporter BASS6, chloroplastic</fullName>
    </recommendedName>
    <alternativeName>
        <fullName>Bile acid transporter 4</fullName>
    </alternativeName>
    <alternativeName>
        <fullName>Bile acid-sodium symporter family protein 6</fullName>
    </alternativeName>
</protein>
<keyword id="KW-0150">Chloroplast</keyword>
<keyword id="KW-0472">Membrane</keyword>
<keyword id="KW-0934">Plastid</keyword>
<keyword id="KW-1185">Reference proteome</keyword>
<keyword id="KW-0809">Transit peptide</keyword>
<keyword id="KW-0812">Transmembrane</keyword>
<keyword id="KW-1133">Transmembrane helix</keyword>
<keyword id="KW-0813">Transport</keyword>
<gene>
    <name type="primary">BASS6</name>
    <name type="synonym">BAT4</name>
    <name type="ordered locus">At4g22840</name>
    <name type="ORF">F7H19.20</name>
    <name type="ORF">T12H17.230</name>
</gene>